<keyword id="KW-1185">Reference proteome</keyword>
<keyword id="KW-0687">Ribonucleoprotein</keyword>
<keyword id="KW-0689">Ribosomal protein</keyword>
<gene>
    <name evidence="1" type="primary">rpl31e</name>
    <name type="ordered locus">Hbut_1598</name>
</gene>
<comment type="similarity">
    <text evidence="1">Belongs to the eukaryotic ribosomal protein eL31 family.</text>
</comment>
<reference key="1">
    <citation type="journal article" date="2007" name="Archaea">
        <title>The genome of Hyperthermus butylicus: a sulfur-reducing, peptide fermenting, neutrophilic Crenarchaeote growing up to 108 degrees C.</title>
        <authorList>
            <person name="Bruegger K."/>
            <person name="Chen L."/>
            <person name="Stark M."/>
            <person name="Zibat A."/>
            <person name="Redder P."/>
            <person name="Ruepp A."/>
            <person name="Awayez M."/>
            <person name="She Q."/>
            <person name="Garrett R.A."/>
            <person name="Klenk H.-P."/>
        </authorList>
    </citation>
    <scope>NUCLEOTIDE SEQUENCE [LARGE SCALE GENOMIC DNA]</scope>
    <source>
        <strain>DSM 5456 / JCM 9403 / PLM1-5</strain>
    </source>
</reference>
<accession>A2BN56</accession>
<feature type="chain" id="PRO_1000049909" description="Large ribosomal subunit protein eL31">
    <location>
        <begin position="1"/>
        <end position="100"/>
    </location>
</feature>
<evidence type="ECO:0000255" key="1">
    <source>
        <dbReference type="HAMAP-Rule" id="MF_00410"/>
    </source>
</evidence>
<evidence type="ECO:0000305" key="2"/>
<proteinExistence type="inferred from homology"/>
<dbReference type="EMBL" id="CP000493">
    <property type="protein sequence ID" value="ABM81417.1"/>
    <property type="molecule type" value="Genomic_DNA"/>
</dbReference>
<dbReference type="RefSeq" id="WP_011822735.1">
    <property type="nucleotide sequence ID" value="NC_008818.1"/>
</dbReference>
<dbReference type="SMR" id="A2BN56"/>
<dbReference type="STRING" id="415426.Hbut_1598"/>
<dbReference type="EnsemblBacteria" id="ABM81417">
    <property type="protein sequence ID" value="ABM81417"/>
    <property type="gene ID" value="Hbut_1598"/>
</dbReference>
<dbReference type="GeneID" id="4782754"/>
<dbReference type="KEGG" id="hbu:Hbut_1598"/>
<dbReference type="eggNOG" id="arCOG04473">
    <property type="taxonomic scope" value="Archaea"/>
</dbReference>
<dbReference type="HOGENOM" id="CLU_112570_3_1_2"/>
<dbReference type="OrthoDB" id="10127at2157"/>
<dbReference type="Proteomes" id="UP000002593">
    <property type="component" value="Chromosome"/>
</dbReference>
<dbReference type="GO" id="GO:0022625">
    <property type="term" value="C:cytosolic large ribosomal subunit"/>
    <property type="evidence" value="ECO:0007669"/>
    <property type="project" value="TreeGrafter"/>
</dbReference>
<dbReference type="GO" id="GO:0003735">
    <property type="term" value="F:structural constituent of ribosome"/>
    <property type="evidence" value="ECO:0007669"/>
    <property type="project" value="InterPro"/>
</dbReference>
<dbReference type="GO" id="GO:0002181">
    <property type="term" value="P:cytoplasmic translation"/>
    <property type="evidence" value="ECO:0007669"/>
    <property type="project" value="TreeGrafter"/>
</dbReference>
<dbReference type="CDD" id="cd00463">
    <property type="entry name" value="Ribosomal_L31e"/>
    <property type="match status" value="1"/>
</dbReference>
<dbReference type="Gene3D" id="3.10.440.10">
    <property type="match status" value="1"/>
</dbReference>
<dbReference type="HAMAP" id="MF_00410">
    <property type="entry name" value="Ribosomal_eL31"/>
    <property type="match status" value="1"/>
</dbReference>
<dbReference type="InterPro" id="IPR000054">
    <property type="entry name" value="Ribosomal_eL31"/>
</dbReference>
<dbReference type="InterPro" id="IPR023621">
    <property type="entry name" value="Ribosomal_eL31_dom_sf"/>
</dbReference>
<dbReference type="NCBIfam" id="NF002258">
    <property type="entry name" value="PRK01192.1-1"/>
    <property type="match status" value="1"/>
</dbReference>
<dbReference type="PANTHER" id="PTHR10956">
    <property type="entry name" value="60S RIBOSOMAL PROTEIN L31"/>
    <property type="match status" value="1"/>
</dbReference>
<dbReference type="PANTHER" id="PTHR10956:SF0">
    <property type="entry name" value="60S RIBOSOMAL PROTEIN L31"/>
    <property type="match status" value="1"/>
</dbReference>
<dbReference type="Pfam" id="PF01198">
    <property type="entry name" value="Ribosomal_L31e"/>
    <property type="match status" value="1"/>
</dbReference>
<dbReference type="SMART" id="SM01380">
    <property type="entry name" value="Ribosomal_L31e"/>
    <property type="match status" value="1"/>
</dbReference>
<dbReference type="SUPFAM" id="SSF54575">
    <property type="entry name" value="Ribosomal protein L31e"/>
    <property type="match status" value="1"/>
</dbReference>
<name>RL31_HYPBU</name>
<organism>
    <name type="scientific">Hyperthermus butylicus (strain DSM 5456 / JCM 9403 / PLM1-5)</name>
    <dbReference type="NCBI Taxonomy" id="415426"/>
    <lineage>
        <taxon>Archaea</taxon>
        <taxon>Thermoproteota</taxon>
        <taxon>Thermoprotei</taxon>
        <taxon>Desulfurococcales</taxon>
        <taxon>Pyrodictiaceae</taxon>
        <taxon>Hyperthermus</taxon>
    </lineage>
</organism>
<protein>
    <recommendedName>
        <fullName evidence="1">Large ribosomal subunit protein eL31</fullName>
    </recommendedName>
    <alternativeName>
        <fullName evidence="2">50S ribosomal protein L31e</fullName>
    </alternativeName>
</protein>
<sequence length="100" mass="11672">MPKDKKEAIYTIPLSRVYWGRRTNRAARAIKLVRKFIARHFGVKEEDVIIHNNVNEYIWSRSIEKPPRRVTVKAVKDPETGKVKVMLIRESKIQQGQATS</sequence>